<keyword id="KW-0997">Cell inner membrane</keyword>
<keyword id="KW-1003">Cell membrane</keyword>
<keyword id="KW-0407">Ion channel</keyword>
<keyword id="KW-0406">Ion transport</keyword>
<keyword id="KW-0472">Membrane</keyword>
<keyword id="KW-0812">Transmembrane</keyword>
<keyword id="KW-1133">Transmembrane helix</keyword>
<keyword id="KW-0813">Transport</keyword>
<organism>
    <name type="scientific">Yersinia pseudotuberculosis serotype O:1b (strain IP 31758)</name>
    <dbReference type="NCBI Taxonomy" id="349747"/>
    <lineage>
        <taxon>Bacteria</taxon>
        <taxon>Pseudomonadati</taxon>
        <taxon>Pseudomonadota</taxon>
        <taxon>Gammaproteobacteria</taxon>
        <taxon>Enterobacterales</taxon>
        <taxon>Yersiniaceae</taxon>
        <taxon>Yersinia</taxon>
    </lineage>
</organism>
<name>MSCL_YERP3</name>
<proteinExistence type="inferred from homology"/>
<accession>A7FNK6</accession>
<gene>
    <name evidence="1" type="primary">mscL</name>
    <name type="ordered locus">YpsIP31758_3886</name>
</gene>
<comment type="function">
    <text evidence="1">Channel that opens in response to stretch forces in the membrane lipid bilayer. May participate in the regulation of osmotic pressure changes within the cell.</text>
</comment>
<comment type="subunit">
    <text evidence="1">Homopentamer.</text>
</comment>
<comment type="subcellular location">
    <subcellularLocation>
        <location evidence="1">Cell inner membrane</location>
        <topology evidence="1">Multi-pass membrane protein</topology>
    </subcellularLocation>
</comment>
<comment type="similarity">
    <text evidence="1">Belongs to the MscL family.</text>
</comment>
<reference key="1">
    <citation type="journal article" date="2007" name="PLoS Genet.">
        <title>The complete genome sequence of Yersinia pseudotuberculosis IP31758, the causative agent of Far East scarlet-like fever.</title>
        <authorList>
            <person name="Eppinger M."/>
            <person name="Rosovitz M.J."/>
            <person name="Fricke W.F."/>
            <person name="Rasko D.A."/>
            <person name="Kokorina G."/>
            <person name="Fayolle C."/>
            <person name="Lindler L.E."/>
            <person name="Carniel E."/>
            <person name="Ravel J."/>
        </authorList>
    </citation>
    <scope>NUCLEOTIDE SEQUENCE [LARGE SCALE GENOMIC DNA]</scope>
    <source>
        <strain>IP 31758</strain>
    </source>
</reference>
<sequence length="137" mass="15049">MSFMKEFREFAMRGNVVDLAVGVIIGAAFGRIVSSLVADIIMPPLGLLLGGVDFKQFHFVLRAAEGTIPAVVMNYGTFIQSIFDFVIVALAIFSAVKLMNKLRREKAEEEPATPPAPTTEEILLAEIRDLLKAQHTK</sequence>
<protein>
    <recommendedName>
        <fullName evidence="1">Large-conductance mechanosensitive channel</fullName>
    </recommendedName>
</protein>
<evidence type="ECO:0000255" key="1">
    <source>
        <dbReference type="HAMAP-Rule" id="MF_00115"/>
    </source>
</evidence>
<feature type="chain" id="PRO_1000057762" description="Large-conductance mechanosensitive channel">
    <location>
        <begin position="1"/>
        <end position="137"/>
    </location>
</feature>
<feature type="transmembrane region" description="Helical" evidence="1">
    <location>
        <begin position="10"/>
        <end position="30"/>
    </location>
</feature>
<feature type="transmembrane region" description="Helical" evidence="1">
    <location>
        <begin position="76"/>
        <end position="96"/>
    </location>
</feature>
<dbReference type="EMBL" id="CP000720">
    <property type="protein sequence ID" value="ABS47833.1"/>
    <property type="molecule type" value="Genomic_DNA"/>
</dbReference>
<dbReference type="RefSeq" id="WP_002209017.1">
    <property type="nucleotide sequence ID" value="NC_009708.1"/>
</dbReference>
<dbReference type="SMR" id="A7FNK6"/>
<dbReference type="GeneID" id="57974366"/>
<dbReference type="KEGG" id="ypi:YpsIP31758_3886"/>
<dbReference type="HOGENOM" id="CLU_095787_0_0_6"/>
<dbReference type="Proteomes" id="UP000002412">
    <property type="component" value="Chromosome"/>
</dbReference>
<dbReference type="GO" id="GO:0005886">
    <property type="term" value="C:plasma membrane"/>
    <property type="evidence" value="ECO:0007669"/>
    <property type="project" value="UniProtKB-SubCell"/>
</dbReference>
<dbReference type="GO" id="GO:0008381">
    <property type="term" value="F:mechanosensitive monoatomic ion channel activity"/>
    <property type="evidence" value="ECO:0007669"/>
    <property type="project" value="UniProtKB-UniRule"/>
</dbReference>
<dbReference type="FunFam" id="1.10.1200.120:FF:000001">
    <property type="entry name" value="Large-conductance mechanosensitive channel"/>
    <property type="match status" value="1"/>
</dbReference>
<dbReference type="Gene3D" id="1.10.1200.120">
    <property type="entry name" value="Large-conductance mechanosensitive channel, MscL, domain 1"/>
    <property type="match status" value="1"/>
</dbReference>
<dbReference type="HAMAP" id="MF_00115">
    <property type="entry name" value="MscL"/>
    <property type="match status" value="1"/>
</dbReference>
<dbReference type="InterPro" id="IPR019823">
    <property type="entry name" value="Mechanosensitive_channel_CS"/>
</dbReference>
<dbReference type="InterPro" id="IPR001185">
    <property type="entry name" value="MS_channel"/>
</dbReference>
<dbReference type="InterPro" id="IPR037673">
    <property type="entry name" value="MSC/AndL"/>
</dbReference>
<dbReference type="InterPro" id="IPR036019">
    <property type="entry name" value="MscL_channel"/>
</dbReference>
<dbReference type="NCBIfam" id="TIGR00220">
    <property type="entry name" value="mscL"/>
    <property type="match status" value="1"/>
</dbReference>
<dbReference type="NCBIfam" id="NF001841">
    <property type="entry name" value="PRK00567.1-1"/>
    <property type="match status" value="1"/>
</dbReference>
<dbReference type="NCBIfam" id="NF001843">
    <property type="entry name" value="PRK00567.1-4"/>
    <property type="match status" value="1"/>
</dbReference>
<dbReference type="PANTHER" id="PTHR30266:SF2">
    <property type="entry name" value="LARGE-CONDUCTANCE MECHANOSENSITIVE CHANNEL"/>
    <property type="match status" value="1"/>
</dbReference>
<dbReference type="PANTHER" id="PTHR30266">
    <property type="entry name" value="MECHANOSENSITIVE CHANNEL MSCL"/>
    <property type="match status" value="1"/>
</dbReference>
<dbReference type="Pfam" id="PF01741">
    <property type="entry name" value="MscL"/>
    <property type="match status" value="1"/>
</dbReference>
<dbReference type="PRINTS" id="PR01264">
    <property type="entry name" value="MECHCHANNEL"/>
</dbReference>
<dbReference type="SUPFAM" id="SSF81330">
    <property type="entry name" value="Gated mechanosensitive channel"/>
    <property type="match status" value="1"/>
</dbReference>
<dbReference type="PROSITE" id="PS01327">
    <property type="entry name" value="MSCL"/>
    <property type="match status" value="1"/>
</dbReference>